<dbReference type="EC" id="3.6.4.13" evidence="1"/>
<dbReference type="EMBL" id="AE008922">
    <property type="protein sequence ID" value="AAM43476.1"/>
    <property type="molecule type" value="Genomic_DNA"/>
</dbReference>
<dbReference type="RefSeq" id="NP_639121.1">
    <property type="nucleotide sequence ID" value="NC_003902.1"/>
</dbReference>
<dbReference type="RefSeq" id="WP_011038857.1">
    <property type="nucleotide sequence ID" value="NC_003902.1"/>
</dbReference>
<dbReference type="SMR" id="Q8P4D4"/>
<dbReference type="STRING" id="190485.XCC3776"/>
<dbReference type="EnsemblBacteria" id="AAM43476">
    <property type="protein sequence ID" value="AAM43476"/>
    <property type="gene ID" value="XCC3776"/>
</dbReference>
<dbReference type="KEGG" id="xcc:XCC3776"/>
<dbReference type="PATRIC" id="fig|190485.4.peg.4041"/>
<dbReference type="eggNOG" id="COG0513">
    <property type="taxonomic scope" value="Bacteria"/>
</dbReference>
<dbReference type="HOGENOM" id="CLU_003041_28_4_6"/>
<dbReference type="OrthoDB" id="9805696at2"/>
<dbReference type="Proteomes" id="UP000001010">
    <property type="component" value="Chromosome"/>
</dbReference>
<dbReference type="GO" id="GO:0005829">
    <property type="term" value="C:cytosol"/>
    <property type="evidence" value="ECO:0000318"/>
    <property type="project" value="GO_Central"/>
</dbReference>
<dbReference type="GO" id="GO:0005524">
    <property type="term" value="F:ATP binding"/>
    <property type="evidence" value="ECO:0007669"/>
    <property type="project" value="UniProtKB-UniRule"/>
</dbReference>
<dbReference type="GO" id="GO:0016887">
    <property type="term" value="F:ATP hydrolysis activity"/>
    <property type="evidence" value="ECO:0007669"/>
    <property type="project" value="RHEA"/>
</dbReference>
<dbReference type="GO" id="GO:0003723">
    <property type="term" value="F:RNA binding"/>
    <property type="evidence" value="ECO:0007669"/>
    <property type="project" value="UniProtKB-UniRule"/>
</dbReference>
<dbReference type="GO" id="GO:0003724">
    <property type="term" value="F:RNA helicase activity"/>
    <property type="evidence" value="ECO:0000318"/>
    <property type="project" value="GO_Central"/>
</dbReference>
<dbReference type="GO" id="GO:0006401">
    <property type="term" value="P:RNA catabolic process"/>
    <property type="evidence" value="ECO:0007669"/>
    <property type="project" value="UniProtKB-UniRule"/>
</dbReference>
<dbReference type="CDD" id="cd00268">
    <property type="entry name" value="DEADc"/>
    <property type="match status" value="1"/>
</dbReference>
<dbReference type="CDD" id="cd18787">
    <property type="entry name" value="SF2_C_DEAD"/>
    <property type="match status" value="1"/>
</dbReference>
<dbReference type="Gene3D" id="3.40.50.300">
    <property type="entry name" value="P-loop containing nucleotide triphosphate hydrolases"/>
    <property type="match status" value="2"/>
</dbReference>
<dbReference type="HAMAP" id="MF_00661">
    <property type="entry name" value="DEAD_helicase_RhlB"/>
    <property type="match status" value="1"/>
</dbReference>
<dbReference type="InterPro" id="IPR011545">
    <property type="entry name" value="DEAD/DEAH_box_helicase_dom"/>
</dbReference>
<dbReference type="InterPro" id="IPR050079">
    <property type="entry name" value="DEAD_box_RNA_helicase"/>
</dbReference>
<dbReference type="InterPro" id="IPR014001">
    <property type="entry name" value="Helicase_ATP-bd"/>
</dbReference>
<dbReference type="InterPro" id="IPR001650">
    <property type="entry name" value="Helicase_C-like"/>
</dbReference>
<dbReference type="InterPro" id="IPR027417">
    <property type="entry name" value="P-loop_NTPase"/>
</dbReference>
<dbReference type="InterPro" id="IPR022077">
    <property type="entry name" value="RhlB"/>
</dbReference>
<dbReference type="InterPro" id="IPR000629">
    <property type="entry name" value="RNA-helicase_DEAD-box_CS"/>
</dbReference>
<dbReference type="InterPro" id="IPR023554">
    <property type="entry name" value="RNA_helicase_ATP-dep_RhlB"/>
</dbReference>
<dbReference type="InterPro" id="IPR014014">
    <property type="entry name" value="RNA_helicase_DEAD_Q_motif"/>
</dbReference>
<dbReference type="NCBIfam" id="NF003390">
    <property type="entry name" value="PRK04537.1"/>
    <property type="match status" value="1"/>
</dbReference>
<dbReference type="PANTHER" id="PTHR47959:SF10">
    <property type="entry name" value="ATP-DEPENDENT RNA HELICASE RHLB"/>
    <property type="match status" value="1"/>
</dbReference>
<dbReference type="PANTHER" id="PTHR47959">
    <property type="entry name" value="ATP-DEPENDENT RNA HELICASE RHLE-RELATED"/>
    <property type="match status" value="1"/>
</dbReference>
<dbReference type="Pfam" id="PF00270">
    <property type="entry name" value="DEAD"/>
    <property type="match status" value="1"/>
</dbReference>
<dbReference type="Pfam" id="PF00271">
    <property type="entry name" value="Helicase_C"/>
    <property type="match status" value="1"/>
</dbReference>
<dbReference type="Pfam" id="PF12300">
    <property type="entry name" value="RhlB"/>
    <property type="match status" value="1"/>
</dbReference>
<dbReference type="SMART" id="SM00487">
    <property type="entry name" value="DEXDc"/>
    <property type="match status" value="1"/>
</dbReference>
<dbReference type="SMART" id="SM00490">
    <property type="entry name" value="HELICc"/>
    <property type="match status" value="1"/>
</dbReference>
<dbReference type="SUPFAM" id="SSF52540">
    <property type="entry name" value="P-loop containing nucleoside triphosphate hydrolases"/>
    <property type="match status" value="1"/>
</dbReference>
<dbReference type="PROSITE" id="PS00039">
    <property type="entry name" value="DEAD_ATP_HELICASE"/>
    <property type="match status" value="1"/>
</dbReference>
<dbReference type="PROSITE" id="PS51192">
    <property type="entry name" value="HELICASE_ATP_BIND_1"/>
    <property type="match status" value="1"/>
</dbReference>
<dbReference type="PROSITE" id="PS51194">
    <property type="entry name" value="HELICASE_CTER"/>
    <property type="match status" value="1"/>
</dbReference>
<dbReference type="PROSITE" id="PS51195">
    <property type="entry name" value="Q_MOTIF"/>
    <property type="match status" value="1"/>
</dbReference>
<sequence>MSDKPLTDLTFSSFDLHPALVAGLESAGFTRCTPIQALTLPVALPGGDVAGQAQTGTGKTLAFLVAVMNRLLIRPALADRKPEDPRALILAPTRELAIQIHKDAVKFGADLGLRFALVYGGVDYDKQRELLQQGVDVIIATPGRLIDYVKQHKVVSLHACEICVLDEADRMFDLGFIKDIRFLLRRMPERGTRQTLLFSATLSHRVLELAYEHMNEPEKLVVETETITAARVRQRIYFPSDEEKQTLLLGLLSRSEGARTMVFVNTKAFVERVARTLERHGYRVGVLSGDVPQKKRESLLNRFQKGQLEILVATDVAARGLHIDGVKYVYNYDLPFDAEDYVHRIGRTARLGEEGDAISFACERYAMSLPDIEAYIEQKIPVEPVTTELLTPLPRTPRATVEGEEVDDDAGDSVGTIFREAREQRAADEARRGGGRSGPGGASRSGSGGGRRDGAGADGKPRPPRRKPRVEGEADPAAAPSETPVVVAAAAETPAVTAAEGERAPRKRRRRRNGRPVEGAEPVVASTPVPAPAAPRKPTQVVAKPVRAAAKPSGSPSLLSRIGRRLRSLVSGS</sequence>
<name>RHLB_XANCP</name>
<comment type="function">
    <text evidence="1">DEAD-box RNA helicase involved in RNA degradation. Has RNA-dependent ATPase activity and unwinds double-stranded RNA.</text>
</comment>
<comment type="catalytic activity">
    <reaction evidence="1">
        <text>ATP + H2O = ADP + phosphate + H(+)</text>
        <dbReference type="Rhea" id="RHEA:13065"/>
        <dbReference type="ChEBI" id="CHEBI:15377"/>
        <dbReference type="ChEBI" id="CHEBI:15378"/>
        <dbReference type="ChEBI" id="CHEBI:30616"/>
        <dbReference type="ChEBI" id="CHEBI:43474"/>
        <dbReference type="ChEBI" id="CHEBI:456216"/>
        <dbReference type="EC" id="3.6.4.13"/>
    </reaction>
</comment>
<comment type="subunit">
    <text evidence="1">Component of the RNA degradosome, which is a multiprotein complex involved in RNA processing and mRNA degradation.</text>
</comment>
<comment type="subcellular location">
    <subcellularLocation>
        <location evidence="1">Cytoplasm</location>
    </subcellularLocation>
</comment>
<comment type="similarity">
    <text evidence="1">Belongs to the DEAD box helicase family. RhlB subfamily.</text>
</comment>
<feature type="chain" id="PRO_0000200791" description="ATP-dependent RNA helicase RhlB">
    <location>
        <begin position="1"/>
        <end position="573"/>
    </location>
</feature>
<feature type="domain" description="Helicase ATP-binding" evidence="1">
    <location>
        <begin position="40"/>
        <end position="220"/>
    </location>
</feature>
<feature type="domain" description="Helicase C-terminal" evidence="1">
    <location>
        <begin position="231"/>
        <end position="393"/>
    </location>
</feature>
<feature type="region of interest" description="Disordered" evidence="2">
    <location>
        <begin position="391"/>
        <end position="559"/>
    </location>
</feature>
<feature type="short sequence motif" description="Q motif">
    <location>
        <begin position="9"/>
        <end position="37"/>
    </location>
</feature>
<feature type="short sequence motif" description="DEAD box">
    <location>
        <begin position="166"/>
        <end position="169"/>
    </location>
</feature>
<feature type="compositionally biased region" description="Low complexity" evidence="2">
    <location>
        <begin position="391"/>
        <end position="400"/>
    </location>
</feature>
<feature type="compositionally biased region" description="Acidic residues" evidence="2">
    <location>
        <begin position="402"/>
        <end position="411"/>
    </location>
</feature>
<feature type="compositionally biased region" description="Basic and acidic residues" evidence="2">
    <location>
        <begin position="419"/>
        <end position="432"/>
    </location>
</feature>
<feature type="compositionally biased region" description="Gly residues" evidence="2">
    <location>
        <begin position="435"/>
        <end position="449"/>
    </location>
</feature>
<feature type="compositionally biased region" description="Basic and acidic residues" evidence="2">
    <location>
        <begin position="450"/>
        <end position="461"/>
    </location>
</feature>
<feature type="compositionally biased region" description="Low complexity" evidence="2">
    <location>
        <begin position="476"/>
        <end position="499"/>
    </location>
</feature>
<feature type="compositionally biased region" description="Basic residues" evidence="2">
    <location>
        <begin position="505"/>
        <end position="514"/>
    </location>
</feature>
<feature type="compositionally biased region" description="Low complexity" evidence="2">
    <location>
        <begin position="516"/>
        <end position="528"/>
    </location>
</feature>
<feature type="compositionally biased region" description="Low complexity" evidence="2">
    <location>
        <begin position="541"/>
        <end position="559"/>
    </location>
</feature>
<feature type="binding site" evidence="1">
    <location>
        <begin position="53"/>
        <end position="60"/>
    </location>
    <ligand>
        <name>ATP</name>
        <dbReference type="ChEBI" id="CHEBI:30616"/>
    </ligand>
</feature>
<protein>
    <recommendedName>
        <fullName evidence="1">ATP-dependent RNA helicase RhlB</fullName>
        <ecNumber evidence="1">3.6.4.13</ecNumber>
    </recommendedName>
</protein>
<keyword id="KW-0067">ATP-binding</keyword>
<keyword id="KW-0963">Cytoplasm</keyword>
<keyword id="KW-0347">Helicase</keyword>
<keyword id="KW-0378">Hydrolase</keyword>
<keyword id="KW-0547">Nucleotide-binding</keyword>
<keyword id="KW-1185">Reference proteome</keyword>
<keyword id="KW-0694">RNA-binding</keyword>
<gene>
    <name evidence="1" type="primary">rhlB</name>
    <name type="ordered locus">XCC3776</name>
</gene>
<reference key="1">
    <citation type="journal article" date="2002" name="Nature">
        <title>Comparison of the genomes of two Xanthomonas pathogens with differing host specificities.</title>
        <authorList>
            <person name="da Silva A.C.R."/>
            <person name="Ferro J.A."/>
            <person name="Reinach F.C."/>
            <person name="Farah C.S."/>
            <person name="Furlan L.R."/>
            <person name="Quaggio R.B."/>
            <person name="Monteiro-Vitorello C.B."/>
            <person name="Van Sluys M.A."/>
            <person name="Almeida N.F. Jr."/>
            <person name="Alves L.M.C."/>
            <person name="do Amaral A.M."/>
            <person name="Bertolini M.C."/>
            <person name="Camargo L.E.A."/>
            <person name="Camarotte G."/>
            <person name="Cannavan F."/>
            <person name="Cardozo J."/>
            <person name="Chambergo F."/>
            <person name="Ciapina L.P."/>
            <person name="Cicarelli R.M.B."/>
            <person name="Coutinho L.L."/>
            <person name="Cursino-Santos J.R."/>
            <person name="El-Dorry H."/>
            <person name="Faria J.B."/>
            <person name="Ferreira A.J.S."/>
            <person name="Ferreira R.C.C."/>
            <person name="Ferro M.I.T."/>
            <person name="Formighieri E.F."/>
            <person name="Franco M.C."/>
            <person name="Greggio C.C."/>
            <person name="Gruber A."/>
            <person name="Katsuyama A.M."/>
            <person name="Kishi L.T."/>
            <person name="Leite R.P."/>
            <person name="Lemos E.G.M."/>
            <person name="Lemos M.V.F."/>
            <person name="Locali E.C."/>
            <person name="Machado M.A."/>
            <person name="Madeira A.M.B.N."/>
            <person name="Martinez-Rossi N.M."/>
            <person name="Martins E.C."/>
            <person name="Meidanis J."/>
            <person name="Menck C.F.M."/>
            <person name="Miyaki C.Y."/>
            <person name="Moon D.H."/>
            <person name="Moreira L.M."/>
            <person name="Novo M.T.M."/>
            <person name="Okura V.K."/>
            <person name="Oliveira M.C."/>
            <person name="Oliveira V.R."/>
            <person name="Pereira H.A."/>
            <person name="Rossi A."/>
            <person name="Sena J.A.D."/>
            <person name="Silva C."/>
            <person name="de Souza R.F."/>
            <person name="Spinola L.A.F."/>
            <person name="Takita M.A."/>
            <person name="Tamura R.E."/>
            <person name="Teixeira E.C."/>
            <person name="Tezza R.I.D."/>
            <person name="Trindade dos Santos M."/>
            <person name="Truffi D."/>
            <person name="Tsai S.M."/>
            <person name="White F.F."/>
            <person name="Setubal J.C."/>
            <person name="Kitajima J.P."/>
        </authorList>
    </citation>
    <scope>NUCLEOTIDE SEQUENCE [LARGE SCALE GENOMIC DNA]</scope>
    <source>
        <strain>ATCC 33913 / DSM 3586 / NCPPB 528 / LMG 568 / P 25</strain>
    </source>
</reference>
<evidence type="ECO:0000255" key="1">
    <source>
        <dbReference type="HAMAP-Rule" id="MF_00661"/>
    </source>
</evidence>
<evidence type="ECO:0000256" key="2">
    <source>
        <dbReference type="SAM" id="MobiDB-lite"/>
    </source>
</evidence>
<accession>Q8P4D4</accession>
<organism>
    <name type="scientific">Xanthomonas campestris pv. campestris (strain ATCC 33913 / DSM 3586 / NCPPB 528 / LMG 568 / P 25)</name>
    <dbReference type="NCBI Taxonomy" id="190485"/>
    <lineage>
        <taxon>Bacteria</taxon>
        <taxon>Pseudomonadati</taxon>
        <taxon>Pseudomonadota</taxon>
        <taxon>Gammaproteobacteria</taxon>
        <taxon>Lysobacterales</taxon>
        <taxon>Lysobacteraceae</taxon>
        <taxon>Xanthomonas</taxon>
    </lineage>
</organism>
<proteinExistence type="inferred from homology"/>